<sequence>MENTSVNKEPSIIVGGFVLGGAMIGAGMFSLPTIMSGAWFINSLFILFIVCFFMFHSGIYILECISKYGAGTNYFDISKELLPKWACYIANASLIFVLYILIYAYISAAGSIIYEASLLYGINFNLRAIFFIFTIALGATIWWGGACASRLTSIFLFIKIVLFILAFSGLFFKAKGDLLFSATFAGKSQLYLYPFIFIIIPYAITSFGYHGNVCSLYKLYNQNERKVVKSCIIGCLLALVIYLLWMIGTMGNLPREQFITIIQKGGNLDAFIDSLYTVLNSKYIEGFLLWFSISAVFCSFLGVAIGLFDYILASLKFKDNKTGRLKSGVLCFTPPLLLCLFFPNGFLIAIAYAGTAACVWAIICPAVMALKARQKFPNSGFKVWGGKKLIYAVIAFGVVGIICQSWRNLIYCLFIVK</sequence>
<protein>
    <recommendedName>
        <fullName>Low affinity tryptophan permease</fullName>
    </recommendedName>
</protein>
<accession>P28785</accession>
<comment type="function">
    <text>Involved in tryptophan transport across the cytoplasmic membrane. Plays a role in transporting tryptophan which is to be used catabolically.</text>
</comment>
<comment type="subcellular location">
    <subcellularLocation>
        <location>Cell inner membrane</location>
        <topology>Multi-pass membrane protein</topology>
    </subcellularLocation>
</comment>
<comment type="induction">
    <text>By tryptophan. Is subject to catabolic repression.</text>
</comment>
<comment type="similarity">
    <text evidence="2">Belongs to the amino acid/polyamine transporter 2 family. Mtr/TnaB/TyrP permease subfamily.</text>
</comment>
<reference key="1">
    <citation type="journal article" date="1992" name="J. Biol. Chem.">
        <title>Characterization of the tryptophanase operon of Proteus vulgaris. Cloning, nucleotide sequence, amino acid homology, and in vitro synthesis of the leader peptide and regulatory analysis.</title>
        <authorList>
            <person name="Kamath A.V."/>
            <person name="Yanofsky C."/>
        </authorList>
    </citation>
    <scope>NUCLEOTIDE SEQUENCE [GENOMIC DNA]</scope>
</reference>
<keyword id="KW-0029">Amino-acid transport</keyword>
<keyword id="KW-0997">Cell inner membrane</keyword>
<keyword id="KW-1003">Cell membrane</keyword>
<keyword id="KW-0472">Membrane</keyword>
<keyword id="KW-0812">Transmembrane</keyword>
<keyword id="KW-1133">Transmembrane helix</keyword>
<keyword id="KW-0813">Transport</keyword>
<keyword id="KW-0823">Tryptophan catabolism</keyword>
<feature type="chain" id="PRO_0000093802" description="Low affinity tryptophan permease">
    <location>
        <begin position="1"/>
        <end position="417"/>
    </location>
</feature>
<feature type="transmembrane region" description="Helical" evidence="1">
    <location>
        <begin position="12"/>
        <end position="32"/>
    </location>
</feature>
<feature type="transmembrane region" description="Helical" evidence="1">
    <location>
        <begin position="34"/>
        <end position="54"/>
    </location>
</feature>
<feature type="transmembrane region" description="Helical" evidence="1">
    <location>
        <begin position="94"/>
        <end position="114"/>
    </location>
</feature>
<feature type="transmembrane region" description="Helical" evidence="1">
    <location>
        <begin position="128"/>
        <end position="148"/>
    </location>
</feature>
<feature type="transmembrane region" description="Helical" evidence="1">
    <location>
        <begin position="152"/>
        <end position="172"/>
    </location>
</feature>
<feature type="transmembrane region" description="Helical" evidence="1">
    <location>
        <begin position="190"/>
        <end position="210"/>
    </location>
</feature>
<feature type="transmembrane region" description="Helical" evidence="1">
    <location>
        <begin position="231"/>
        <end position="251"/>
    </location>
</feature>
<feature type="transmembrane region" description="Helical" evidence="1">
    <location>
        <begin position="288"/>
        <end position="308"/>
    </location>
</feature>
<feature type="transmembrane region" description="Helical" evidence="1">
    <location>
        <begin position="325"/>
        <end position="345"/>
    </location>
</feature>
<feature type="transmembrane region" description="Helical" evidence="1">
    <location>
        <begin position="346"/>
        <end position="366"/>
    </location>
</feature>
<feature type="transmembrane region" description="Helical" evidence="1">
    <location>
        <begin position="383"/>
        <end position="403"/>
    </location>
</feature>
<evidence type="ECO:0000255" key="1"/>
<evidence type="ECO:0000305" key="2"/>
<dbReference type="EMBL" id="M93277">
    <property type="protein sequence ID" value="AAA25665.1"/>
    <property type="molecule type" value="Genomic_DNA"/>
</dbReference>
<dbReference type="PIR" id="C44038">
    <property type="entry name" value="C44038"/>
</dbReference>
<dbReference type="SMR" id="P28785"/>
<dbReference type="STRING" id="585.DR95_2913"/>
<dbReference type="eggNOG" id="COG0814">
    <property type="taxonomic scope" value="Bacteria"/>
</dbReference>
<dbReference type="GO" id="GO:0005886">
    <property type="term" value="C:plasma membrane"/>
    <property type="evidence" value="ECO:0007669"/>
    <property type="project" value="UniProtKB-SubCell"/>
</dbReference>
<dbReference type="GO" id="GO:0015173">
    <property type="term" value="F:aromatic amino acid transmembrane transporter activity"/>
    <property type="evidence" value="ECO:0007669"/>
    <property type="project" value="InterPro"/>
</dbReference>
<dbReference type="GO" id="GO:0003333">
    <property type="term" value="P:amino acid transmembrane transport"/>
    <property type="evidence" value="ECO:0007669"/>
    <property type="project" value="InterPro"/>
</dbReference>
<dbReference type="GO" id="GO:0006569">
    <property type="term" value="P:L-tryptophan catabolic process"/>
    <property type="evidence" value="ECO:0007669"/>
    <property type="project" value="UniProtKB-KW"/>
</dbReference>
<dbReference type="Gene3D" id="1.20.1740.10">
    <property type="entry name" value="Amino acid/polyamine transporter I"/>
    <property type="match status" value="1"/>
</dbReference>
<dbReference type="InterPro" id="IPR018227">
    <property type="entry name" value="Amino_acid_transport_2"/>
</dbReference>
<dbReference type="InterPro" id="IPR013061">
    <property type="entry name" value="Trp/try_permease_CS"/>
</dbReference>
<dbReference type="InterPro" id="IPR013059">
    <property type="entry name" value="Trp_tyr_transpt"/>
</dbReference>
<dbReference type="NCBIfam" id="TIGR00837">
    <property type="entry name" value="araaP"/>
    <property type="match status" value="1"/>
</dbReference>
<dbReference type="PANTHER" id="PTHR46997">
    <property type="entry name" value="LOW AFFINITY TRYPTOPHAN PERMEASE-RELATED"/>
    <property type="match status" value="1"/>
</dbReference>
<dbReference type="PANTHER" id="PTHR46997:SF1">
    <property type="entry name" value="LOW AFFINITY TRYPTOPHAN PERMEASE-RELATED"/>
    <property type="match status" value="1"/>
</dbReference>
<dbReference type="Pfam" id="PF03222">
    <property type="entry name" value="Trp_Tyr_perm"/>
    <property type="match status" value="1"/>
</dbReference>
<dbReference type="PRINTS" id="PR00166">
    <property type="entry name" value="AROAAPRMEASE"/>
</dbReference>
<dbReference type="PROSITE" id="PS00594">
    <property type="entry name" value="AROMATIC_AA_PERMEASE_1"/>
    <property type="match status" value="1"/>
</dbReference>
<name>TNAB_PROVU</name>
<proteinExistence type="evidence at transcript level"/>
<gene>
    <name type="primary">tnaB</name>
    <name type="synonym">trpP</name>
</gene>
<organism>
    <name type="scientific">Proteus vulgaris</name>
    <dbReference type="NCBI Taxonomy" id="585"/>
    <lineage>
        <taxon>Bacteria</taxon>
        <taxon>Pseudomonadati</taxon>
        <taxon>Pseudomonadota</taxon>
        <taxon>Gammaproteobacteria</taxon>
        <taxon>Enterobacterales</taxon>
        <taxon>Morganellaceae</taxon>
        <taxon>Proteus</taxon>
    </lineage>
</organism>